<gene>
    <name evidence="3" type="primary">recX</name>
    <name evidence="2" type="synonym">yfhG</name>
    <name type="ordered locus">BSU08520</name>
</gene>
<sequence>MPFITKISTQKKNTERFNIFLDDKYAFSVDADVLVKFELKKGKELDDLDIIEIQYGDEVKKGFNRALDFLSYRMRSTKEVEDHLKKKETSPPVIAEVIHRLNDYKYLNDQEFAAAYVSTHKKTNGKGPDVLFRELRAKGIDDDTIKEALSSFSFEDQTREAVKHVEKLLKKDKKLSTKELKQRAQLQLQRKGFSFDVISAAMDQIEYENDEDTEKEALRLHAEKAFRKYRYDGSYESAMKVKQFLFRKGFSLDLIEQLLQEEEY</sequence>
<feature type="chain" id="PRO_0000162420" description="Regulatory protein RecX">
    <location>
        <begin position="1"/>
        <end position="264"/>
    </location>
</feature>
<evidence type="ECO:0000269" key="1">
    <source>
    </source>
</evidence>
<evidence type="ECO:0000303" key="2">
    <source>
    </source>
</evidence>
<evidence type="ECO:0000303" key="3">
    <source>
    </source>
</evidence>
<evidence type="ECO:0000305" key="4"/>
<name>RECX_BACSU</name>
<protein>
    <recommendedName>
        <fullName>Regulatory protein RecX</fullName>
    </recommendedName>
</protein>
<reference key="1">
    <citation type="journal article" date="1996" name="DNA Res.">
        <title>Cloning and sequencing of a 27.8-kb nucleotide sequence of the 79 degrees-81 degrees region of the Bacillus subtilis genome containing the sspE locus.</title>
        <authorList>
            <person name="Yamamoto H."/>
            <person name="Uchiyama S."/>
            <person name="Sekiguchi J."/>
        </authorList>
    </citation>
    <scope>NUCLEOTIDE SEQUENCE [GENOMIC DNA]</scope>
</reference>
<reference key="2">
    <citation type="journal article" date="1997" name="Nature">
        <title>The complete genome sequence of the Gram-positive bacterium Bacillus subtilis.</title>
        <authorList>
            <person name="Kunst F."/>
            <person name="Ogasawara N."/>
            <person name="Moszer I."/>
            <person name="Albertini A.M."/>
            <person name="Alloni G."/>
            <person name="Azevedo V."/>
            <person name="Bertero M.G."/>
            <person name="Bessieres P."/>
            <person name="Bolotin A."/>
            <person name="Borchert S."/>
            <person name="Borriss R."/>
            <person name="Boursier L."/>
            <person name="Brans A."/>
            <person name="Braun M."/>
            <person name="Brignell S.C."/>
            <person name="Bron S."/>
            <person name="Brouillet S."/>
            <person name="Bruschi C.V."/>
            <person name="Caldwell B."/>
            <person name="Capuano V."/>
            <person name="Carter N.M."/>
            <person name="Choi S.-K."/>
            <person name="Codani J.-J."/>
            <person name="Connerton I.F."/>
            <person name="Cummings N.J."/>
            <person name="Daniel R.A."/>
            <person name="Denizot F."/>
            <person name="Devine K.M."/>
            <person name="Duesterhoeft A."/>
            <person name="Ehrlich S.D."/>
            <person name="Emmerson P.T."/>
            <person name="Entian K.-D."/>
            <person name="Errington J."/>
            <person name="Fabret C."/>
            <person name="Ferrari E."/>
            <person name="Foulger D."/>
            <person name="Fritz C."/>
            <person name="Fujita M."/>
            <person name="Fujita Y."/>
            <person name="Fuma S."/>
            <person name="Galizzi A."/>
            <person name="Galleron N."/>
            <person name="Ghim S.-Y."/>
            <person name="Glaser P."/>
            <person name="Goffeau A."/>
            <person name="Golightly E.J."/>
            <person name="Grandi G."/>
            <person name="Guiseppi G."/>
            <person name="Guy B.J."/>
            <person name="Haga K."/>
            <person name="Haiech J."/>
            <person name="Harwood C.R."/>
            <person name="Henaut A."/>
            <person name="Hilbert H."/>
            <person name="Holsappel S."/>
            <person name="Hosono S."/>
            <person name="Hullo M.-F."/>
            <person name="Itaya M."/>
            <person name="Jones L.-M."/>
            <person name="Joris B."/>
            <person name="Karamata D."/>
            <person name="Kasahara Y."/>
            <person name="Klaerr-Blanchard M."/>
            <person name="Klein C."/>
            <person name="Kobayashi Y."/>
            <person name="Koetter P."/>
            <person name="Koningstein G."/>
            <person name="Krogh S."/>
            <person name="Kumano M."/>
            <person name="Kurita K."/>
            <person name="Lapidus A."/>
            <person name="Lardinois S."/>
            <person name="Lauber J."/>
            <person name="Lazarevic V."/>
            <person name="Lee S.-M."/>
            <person name="Levine A."/>
            <person name="Liu H."/>
            <person name="Masuda S."/>
            <person name="Mauel C."/>
            <person name="Medigue C."/>
            <person name="Medina N."/>
            <person name="Mellado R.P."/>
            <person name="Mizuno M."/>
            <person name="Moestl D."/>
            <person name="Nakai S."/>
            <person name="Noback M."/>
            <person name="Noone D."/>
            <person name="O'Reilly M."/>
            <person name="Ogawa K."/>
            <person name="Ogiwara A."/>
            <person name="Oudega B."/>
            <person name="Park S.-H."/>
            <person name="Parro V."/>
            <person name="Pohl T.M."/>
            <person name="Portetelle D."/>
            <person name="Porwollik S."/>
            <person name="Prescott A.M."/>
            <person name="Presecan E."/>
            <person name="Pujic P."/>
            <person name="Purnelle B."/>
            <person name="Rapoport G."/>
            <person name="Rey M."/>
            <person name="Reynolds S."/>
            <person name="Rieger M."/>
            <person name="Rivolta C."/>
            <person name="Rocha E."/>
            <person name="Roche B."/>
            <person name="Rose M."/>
            <person name="Sadaie Y."/>
            <person name="Sato T."/>
            <person name="Scanlan E."/>
            <person name="Schleich S."/>
            <person name="Schroeter R."/>
            <person name="Scoffone F."/>
            <person name="Sekiguchi J."/>
            <person name="Sekowska A."/>
            <person name="Seror S.J."/>
            <person name="Serror P."/>
            <person name="Shin B.-S."/>
            <person name="Soldo B."/>
            <person name="Sorokin A."/>
            <person name="Tacconi E."/>
            <person name="Takagi T."/>
            <person name="Takahashi H."/>
            <person name="Takemaru K."/>
            <person name="Takeuchi M."/>
            <person name="Tamakoshi A."/>
            <person name="Tanaka T."/>
            <person name="Terpstra P."/>
            <person name="Tognoni A."/>
            <person name="Tosato V."/>
            <person name="Uchiyama S."/>
            <person name="Vandenbol M."/>
            <person name="Vannier F."/>
            <person name="Vassarotti A."/>
            <person name="Viari A."/>
            <person name="Wambutt R."/>
            <person name="Wedler E."/>
            <person name="Wedler H."/>
            <person name="Weitzenegger T."/>
            <person name="Winters P."/>
            <person name="Wipat A."/>
            <person name="Yamamoto H."/>
            <person name="Yamane K."/>
            <person name="Yasumoto K."/>
            <person name="Yata K."/>
            <person name="Yoshida K."/>
            <person name="Yoshikawa H.-F."/>
            <person name="Zumstein E."/>
            <person name="Yoshikawa H."/>
            <person name="Danchin A."/>
        </authorList>
    </citation>
    <scope>NUCLEOTIDE SEQUENCE [LARGE SCALE GENOMIC DNA]</scope>
    <source>
        <strain>168</strain>
    </source>
</reference>
<reference key="3">
    <citation type="journal article" date="2020" name="Front. Microbiol.">
        <title>Bacillus subtilis RarA Acts as a Positive RecA Accessory Protein.</title>
        <authorList>
            <person name="Romero H."/>
            <person name="Serrano E."/>
            <person name="Hernandez-Tamayo R."/>
            <person name="Carrasco B."/>
            <person name="Cardenas P.P."/>
            <person name="Ayora S."/>
            <person name="Graumann P.L."/>
            <person name="Alonso J.C."/>
        </authorList>
    </citation>
    <scope>FUNCTION</scope>
    <scope>DISRUPTION PHENOTYPE</scope>
    <source>
        <strain>168 / YB886 / BG214</strain>
    </source>
</reference>
<dbReference type="EMBL" id="D85082">
    <property type="protein sequence ID" value="BAA24473.1"/>
    <property type="molecule type" value="Genomic_DNA"/>
</dbReference>
<dbReference type="EMBL" id="AL009126">
    <property type="protein sequence ID" value="CAB12681.1"/>
    <property type="molecule type" value="Genomic_DNA"/>
</dbReference>
<dbReference type="PIR" id="H69800">
    <property type="entry name" value="H69800"/>
</dbReference>
<dbReference type="RefSeq" id="NP_388733.1">
    <property type="nucleotide sequence ID" value="NC_000964.3"/>
</dbReference>
<dbReference type="RefSeq" id="WP_003243354.1">
    <property type="nucleotide sequence ID" value="NZ_OZ025638.1"/>
</dbReference>
<dbReference type="SMR" id="O31575"/>
<dbReference type="FunCoup" id="O31575">
    <property type="interactions" value="14"/>
</dbReference>
<dbReference type="STRING" id="224308.BSU08520"/>
<dbReference type="PaxDb" id="224308-BSU08520"/>
<dbReference type="EnsemblBacteria" id="CAB12681">
    <property type="protein sequence ID" value="CAB12681"/>
    <property type="gene ID" value="BSU_08520"/>
</dbReference>
<dbReference type="GeneID" id="939727"/>
<dbReference type="KEGG" id="bsu:BSU08520"/>
<dbReference type="PATRIC" id="fig|224308.179.peg.919"/>
<dbReference type="eggNOG" id="COG2137">
    <property type="taxonomic scope" value="Bacteria"/>
</dbReference>
<dbReference type="InParanoid" id="O31575"/>
<dbReference type="OrthoDB" id="5421057at2"/>
<dbReference type="PhylomeDB" id="O31575"/>
<dbReference type="BioCyc" id="BSUB:BSU08520-MONOMER"/>
<dbReference type="Proteomes" id="UP000001570">
    <property type="component" value="Chromosome"/>
</dbReference>
<dbReference type="GO" id="GO:0005737">
    <property type="term" value="C:cytoplasm"/>
    <property type="evidence" value="ECO:0007669"/>
    <property type="project" value="UniProtKB-SubCell"/>
</dbReference>
<dbReference type="GO" id="GO:0006282">
    <property type="term" value="P:regulation of DNA repair"/>
    <property type="evidence" value="ECO:0007669"/>
    <property type="project" value="UniProtKB-UniRule"/>
</dbReference>
<dbReference type="Gene3D" id="1.10.10.10">
    <property type="entry name" value="Winged helix-like DNA-binding domain superfamily/Winged helix DNA-binding domain"/>
    <property type="match status" value="4"/>
</dbReference>
<dbReference type="HAMAP" id="MF_01114">
    <property type="entry name" value="RecX"/>
    <property type="match status" value="1"/>
</dbReference>
<dbReference type="InterPro" id="IPR053926">
    <property type="entry name" value="RecX_HTH_1st"/>
</dbReference>
<dbReference type="InterPro" id="IPR053924">
    <property type="entry name" value="RecX_HTH_2nd"/>
</dbReference>
<dbReference type="InterPro" id="IPR053925">
    <property type="entry name" value="RecX_HTH_3rd"/>
</dbReference>
<dbReference type="InterPro" id="IPR003783">
    <property type="entry name" value="Regulatory_RecX"/>
</dbReference>
<dbReference type="InterPro" id="IPR036388">
    <property type="entry name" value="WH-like_DNA-bd_sf"/>
</dbReference>
<dbReference type="NCBIfam" id="NF010733">
    <property type="entry name" value="PRK14135.1"/>
    <property type="match status" value="1"/>
</dbReference>
<dbReference type="PANTHER" id="PTHR33602">
    <property type="entry name" value="REGULATORY PROTEIN RECX FAMILY PROTEIN"/>
    <property type="match status" value="1"/>
</dbReference>
<dbReference type="PANTHER" id="PTHR33602:SF1">
    <property type="entry name" value="REGULATORY PROTEIN RECX FAMILY PROTEIN"/>
    <property type="match status" value="1"/>
</dbReference>
<dbReference type="Pfam" id="PF21982">
    <property type="entry name" value="RecX_HTH1"/>
    <property type="match status" value="1"/>
</dbReference>
<dbReference type="Pfam" id="PF02631">
    <property type="entry name" value="RecX_HTH2"/>
    <property type="match status" value="1"/>
</dbReference>
<dbReference type="Pfam" id="PF21981">
    <property type="entry name" value="RecX_HTH3"/>
    <property type="match status" value="2"/>
</dbReference>
<keyword id="KW-0963">Cytoplasm</keyword>
<keyword id="KW-1185">Reference proteome</keyword>
<organism>
    <name type="scientific">Bacillus subtilis (strain 168)</name>
    <dbReference type="NCBI Taxonomy" id="224308"/>
    <lineage>
        <taxon>Bacteria</taxon>
        <taxon>Bacillati</taxon>
        <taxon>Bacillota</taxon>
        <taxon>Bacilli</taxon>
        <taxon>Bacillales</taxon>
        <taxon>Bacillaceae</taxon>
        <taxon>Bacillus</taxon>
    </lineage>
</organism>
<accession>O31575</accession>
<comment type="function">
    <text evidence="1">Negatively modulates RecA activity.</text>
</comment>
<comment type="subcellular location">
    <subcellularLocation>
        <location evidence="4">Cytoplasm</location>
    </subcellularLocation>
</comment>
<comment type="disruption phenotype">
    <text evidence="1">A single recX deletion rapidly increases RecA expression after DNA damage.</text>
</comment>
<comment type="similarity">
    <text evidence="4">Belongs to the RecX family.</text>
</comment>
<proteinExistence type="inferred from homology"/>